<dbReference type="EMBL" id="M29725">
    <property type="protein sequence ID" value="AAA98165.1"/>
    <property type="molecule type" value="Genomic_DNA"/>
</dbReference>
<dbReference type="EMBL" id="X15669">
    <property type="protein sequence ID" value="CAA33710.1"/>
    <property type="molecule type" value="Genomic_DNA"/>
</dbReference>
<dbReference type="PIR" id="A25599">
    <property type="entry name" value="A25599"/>
</dbReference>
<dbReference type="PIR" id="S05980">
    <property type="entry name" value="S05980"/>
</dbReference>
<dbReference type="RefSeq" id="NP_040420.1">
    <property type="nucleotide sequence ID" value="NC_001380.1"/>
</dbReference>
<dbReference type="RefSeq" id="WP_010889903.1">
    <property type="nucleotide sequence ID" value="NC_010096.1"/>
</dbReference>
<dbReference type="RefSeq" id="YP_001586271.1">
    <property type="nucleotide sequence ID" value="NC_010096.1"/>
</dbReference>
<dbReference type="PDB" id="1B01">
    <property type="method" value="X-ray"/>
    <property type="resolution" value="2.56 A"/>
    <property type="chains" value="A/B=1-45"/>
</dbReference>
<dbReference type="PDB" id="1EA4">
    <property type="method" value="X-ray"/>
    <property type="resolution" value="2.95 A"/>
    <property type="chains" value="A/B/D/E/F/G/H/J/K/L=1-45"/>
</dbReference>
<dbReference type="PDB" id="2CPG">
    <property type="method" value="X-ray"/>
    <property type="resolution" value="1.60 A"/>
    <property type="chains" value="A/B/C=1-44"/>
</dbReference>
<dbReference type="PDBsum" id="1B01"/>
<dbReference type="PDBsum" id="1EA4"/>
<dbReference type="PDBsum" id="2CPG"/>
<dbReference type="SMR" id="P13920"/>
<dbReference type="EvolutionaryTrace" id="P13920"/>
<dbReference type="CollecTF" id="EXPREG_00000920"/>
<dbReference type="GO" id="GO:0032993">
    <property type="term" value="C:protein-DNA complex"/>
    <property type="evidence" value="ECO:0000269"/>
    <property type="project" value="CollecTF"/>
</dbReference>
<dbReference type="GO" id="GO:0043565">
    <property type="term" value="F:sequence-specific DNA binding"/>
    <property type="evidence" value="ECO:0000269"/>
    <property type="project" value="CollecTF"/>
</dbReference>
<dbReference type="GO" id="GO:0006276">
    <property type="term" value="P:plasmid maintenance"/>
    <property type="evidence" value="ECO:0007669"/>
    <property type="project" value="UniProtKB-KW"/>
</dbReference>
<dbReference type="GO" id="GO:0006355">
    <property type="term" value="P:regulation of DNA-templated transcription"/>
    <property type="evidence" value="ECO:0007669"/>
    <property type="project" value="InterPro"/>
</dbReference>
<dbReference type="CDD" id="cd21631">
    <property type="entry name" value="RHH_CopG_NikR-like"/>
    <property type="match status" value="1"/>
</dbReference>
<dbReference type="Gene3D" id="1.10.1220.10">
    <property type="entry name" value="Met repressor-like"/>
    <property type="match status" value="1"/>
</dbReference>
<dbReference type="InterPro" id="IPR013321">
    <property type="entry name" value="Arc_rbn_hlx_hlx"/>
</dbReference>
<dbReference type="InterPro" id="IPR002145">
    <property type="entry name" value="CopG"/>
</dbReference>
<dbReference type="InterPro" id="IPR010985">
    <property type="entry name" value="Ribbon_hlx_hlx"/>
</dbReference>
<dbReference type="Pfam" id="PF01402">
    <property type="entry name" value="RHH_1"/>
    <property type="match status" value="1"/>
</dbReference>
<dbReference type="SUPFAM" id="SSF47598">
    <property type="entry name" value="Ribbon-helix-helix"/>
    <property type="match status" value="1"/>
</dbReference>
<accession>P13920</accession>
<sequence length="45" mass="5115">MKKRLTITLSESVLENLEKMAREMGLSKSAMISVALENYKKGQEK</sequence>
<reference key="1">
    <citation type="journal article" date="1986" name="J. Mol. Biol.">
        <title>Identification and analysis of genes for tetracycline resistance and replication functions in the broad-host-range plasmid pLS1.</title>
        <authorList>
            <person name="Lacks S.A."/>
            <person name="Lopez P."/>
            <person name="Greenberg B."/>
            <person name="Espinosa M."/>
        </authorList>
    </citation>
    <scope>NUCLEOTIDE SEQUENCE [GENOMIC DNA]</scope>
    <source>
        <plasmid>pLS1</plasmid>
    </source>
</reference>
<reference key="2">
    <citation type="journal article" date="1989" name="Nucleic Acids Res.">
        <title>Similarity of minus origins of replication and flanking open reading frames of plasmids pUB110, pTB913 and pMV158.</title>
        <authorList>
            <person name="van der Lelie D."/>
            <person name="Bron S."/>
            <person name="Venema G."/>
            <person name="Oskam L."/>
        </authorList>
    </citation>
    <scope>NUCLEOTIDE SEQUENCE [GENOMIC DNA]</scope>
    <source>
        <plasmid>pMV158</plasmid>
    </source>
</reference>
<reference key="3">
    <citation type="journal article" date="1989" name="Nucleic Acids Res.">
        <title>Purification and characterization of RepA, a protein involved in the copy number control of plasmid pLS1.</title>
        <authorList>
            <person name="del Solar G.H."/>
            <person name="de la Campa A.G."/>
            <person name="Perez-Martin J."/>
            <person name="Choli T."/>
            <person name="Espinosa M."/>
        </authorList>
    </citation>
    <scope>PROTEIN SEQUENCE</scope>
    <scope>FUNCTION</scope>
    <scope>SUBUNIT</scope>
    <scope>MUTAGENESIS OF ALA-30</scope>
    <source>
        <plasmid>pLS1</plasmid>
    </source>
</reference>
<reference key="4">
    <citation type="journal article" date="1990" name="J. Biol. Chem.">
        <title>Plasmid pLS1-encoded RepA protein regulates transcription from repAB promoter by binding to a DNA sequence containing a 13-base pair symmetric element.</title>
        <authorList>
            <person name="del Solar G.H."/>
            <person name="Perez-Martin J."/>
            <person name="Espinosa M."/>
        </authorList>
    </citation>
    <scope>FUNCTION</scope>
    <scope>INDUCTION</scope>
</reference>
<reference key="5">
    <citation type="journal article" date="1998" name="EMBO J.">
        <title>The structure of plasmid-encoded transcriptional repressor CopG unliganded and bound to its operator.</title>
        <authorList>
            <person name="Gomis-Rueth F.-X."/>
            <person name="Sola M."/>
            <person name="Acebo P."/>
            <person name="Parraga A."/>
            <person name="Guasch A."/>
            <person name="Eritja R."/>
            <person name="Gonzalez A."/>
            <person name="Espinosa M."/>
            <person name="del Solar G.H."/>
            <person name="Coll M."/>
        </authorList>
    </citation>
    <scope>X-RAY CRYSTALLOGRAPHY (2.56 ANGSTROMS)</scope>
    <source>
        <plasmid>pMV158</plasmid>
    </source>
</reference>
<comment type="function">
    <text evidence="2 3">Regulates the plasmid copy number (PubMed:2373704, PubMed:2497439). Binds to the repAB promoter thus controlling the synthesis of the plasmid replication initiator protein RepB (PubMed:2373704).</text>
</comment>
<comment type="subunit">
    <text evidence="3">Homodimer.</text>
</comment>
<comment type="induction">
    <text evidence="2">Represses its own synthesis.</text>
</comment>
<comment type="similarity">
    <text evidence="5">Belongs to the transcriptional regulatory CopG/NikR family.</text>
</comment>
<name>COPG_STRAG</name>
<keyword id="KW-0002">3D-structure</keyword>
<keyword id="KW-0903">Direct protein sequencing</keyword>
<keyword id="KW-0238">DNA-binding</keyword>
<keyword id="KW-0614">Plasmid</keyword>
<keyword id="KW-0615">Plasmid copy control</keyword>
<keyword id="KW-0678">Repressor</keyword>
<keyword id="KW-0804">Transcription</keyword>
<keyword id="KW-0805">Transcription regulation</keyword>
<evidence type="ECO:0000255" key="1"/>
<evidence type="ECO:0000269" key="2">
    <source>
    </source>
</evidence>
<evidence type="ECO:0000269" key="3">
    <source>
    </source>
</evidence>
<evidence type="ECO:0000303" key="4">
    <source>
    </source>
</evidence>
<evidence type="ECO:0000305" key="5"/>
<evidence type="ECO:0007829" key="6">
    <source>
        <dbReference type="PDB" id="2CPG"/>
    </source>
</evidence>
<gene>
    <name type="primary">copG</name>
    <name evidence="4" type="synonym">repA</name>
</gene>
<organism>
    <name type="scientific">Streptococcus agalactiae</name>
    <dbReference type="NCBI Taxonomy" id="1311"/>
    <lineage>
        <taxon>Bacteria</taxon>
        <taxon>Bacillati</taxon>
        <taxon>Bacillota</taxon>
        <taxon>Bacilli</taxon>
        <taxon>Lactobacillales</taxon>
        <taxon>Streptococcaceae</taxon>
        <taxon>Streptococcus</taxon>
    </lineage>
</organism>
<proteinExistence type="evidence at protein level"/>
<protein>
    <recommendedName>
        <fullName>Protein CopG</fullName>
    </recommendedName>
    <alternativeName>
        <fullName>Protein RepA</fullName>
    </alternativeName>
</protein>
<feature type="chain" id="PRO_0000139317" description="Protein CopG">
    <location>
        <begin position="1"/>
        <end position="45"/>
    </location>
</feature>
<feature type="DNA-binding region" description="H-T-H motif" evidence="1">
    <location>
        <begin position="16"/>
        <end position="36"/>
    </location>
</feature>
<feature type="mutagenesis site" description="5-fold increase in plasmid copy number." evidence="3">
    <original>A</original>
    <variation>E</variation>
    <location>
        <position position="30"/>
    </location>
</feature>
<feature type="strand" evidence="6">
    <location>
        <begin position="2"/>
        <end position="10"/>
    </location>
</feature>
<feature type="helix" evidence="6">
    <location>
        <begin position="11"/>
        <end position="24"/>
    </location>
</feature>
<feature type="helix" evidence="6">
    <location>
        <begin position="28"/>
        <end position="41"/>
    </location>
</feature>
<geneLocation type="plasmid">
    <name>pLS1</name>
</geneLocation>
<geneLocation type="plasmid">
    <name>pMV158</name>
</geneLocation>